<organism>
    <name type="scientific">Galdieria sulphuraria</name>
    <name type="common">Red alga</name>
    <dbReference type="NCBI Taxonomy" id="130081"/>
    <lineage>
        <taxon>Eukaryota</taxon>
        <taxon>Rhodophyta</taxon>
        <taxon>Bangiophyceae</taxon>
        <taxon>Galdieriales</taxon>
        <taxon>Galdieriaceae</taxon>
        <taxon>Galdieria</taxon>
    </lineage>
</organism>
<protein>
    <recommendedName>
        <fullName evidence="1">Ribulose bisphosphate carboxylase small subunit</fullName>
        <shortName evidence="1">RuBisCO small subunit</shortName>
    </recommendedName>
</protein>
<comment type="function">
    <text evidence="1 2 4">RuBisCO catalyzes two reactions: the carboxylation of D-ribulose 1,5-bisphosphate, the primary event in carbon dioxide fixation, as well as the oxidative fragmentation of the pentose substrate in the photorespiration process. Both reactions occur simultaneously and in competition at the same active site. Although the small subunit is not catalytic it is essential for maximal activity. Carbon dioxide and oxygen bind in the same pocket of the enzyme in a similar manner (PubMed:23112176).</text>
</comment>
<comment type="subunit">
    <text evidence="1 2">Heterohexadecamer of 8 large and 8 small subunits.</text>
</comment>
<comment type="subcellular location">
    <subcellularLocation>
        <location evidence="1">Plastid</location>
        <location evidence="1">Chloroplast</location>
    </subcellularLocation>
</comment>
<comment type="miscellaneous">
    <text>In this alga, in contrast to plants, the small subunit is encoded in the chloroplast.</text>
</comment>
<comment type="miscellaneous">
    <text evidence="3">Although originally identified as Cyanidium caldarium, these sequences derive from Galdieria sulphuraria.</text>
</comment>
<comment type="miscellaneous">
    <text evidence="1 2">The basic functional RuBisCO is composed of a large chain homodimer in a 'head-to-tail' conformation. In form I RuBisCO this homodimer is arranged in a barrel-like tetramer with the small subunits forming a tetrameric 'cap' on each end of the 'barrel'.</text>
</comment>
<comment type="similarity">
    <text evidence="1">Belongs to the RuBisCO small chain family.</text>
</comment>
<geneLocation type="chloroplast"/>
<name>RBS_GALSU</name>
<sequence length="138" mass="16206">MRITQGTFSFLPDLTDEQIKKQIDYMISKKLAIGIEYTNDIHPRNSFWEMWGLPLFEVTDPAPVLFEINACRKAKSNFYIKVVGFSSERGIESTIISFIVNRPKHEPGFNLIRQEDKSRSIKYSIQAYETYKPEDQRY</sequence>
<keyword id="KW-0002">3D-structure</keyword>
<keyword id="KW-0113">Calvin cycle</keyword>
<keyword id="KW-0120">Carbon dioxide fixation</keyword>
<keyword id="KW-0150">Chloroplast</keyword>
<keyword id="KW-0601">Photorespiration</keyword>
<keyword id="KW-0602">Photosynthesis</keyword>
<keyword id="KW-0934">Plastid</keyword>
<dbReference type="EMBL" id="X55524">
    <property type="protein sequence ID" value="CAA39141.2"/>
    <property type="molecule type" value="Genomic_DNA"/>
</dbReference>
<dbReference type="EMBL" id="AF233069">
    <property type="protein sequence ID" value="AAF81682.1"/>
    <property type="molecule type" value="Genomic_DNA"/>
</dbReference>
<dbReference type="PDB" id="4F0H">
    <property type="method" value="X-ray"/>
    <property type="resolution" value="1.96 A"/>
    <property type="chains" value="B=1-138"/>
</dbReference>
<dbReference type="PDB" id="4F0K">
    <property type="method" value="X-ray"/>
    <property type="resolution" value="2.05 A"/>
    <property type="chains" value="B=1-138"/>
</dbReference>
<dbReference type="PDB" id="4F0M">
    <property type="method" value="X-ray"/>
    <property type="resolution" value="2.25 A"/>
    <property type="chains" value="B=1-138"/>
</dbReference>
<dbReference type="PDBsum" id="4F0H"/>
<dbReference type="PDBsum" id="4F0K"/>
<dbReference type="PDBsum" id="4F0M"/>
<dbReference type="SMR" id="P23756"/>
<dbReference type="DIP" id="DIP-60090N"/>
<dbReference type="IntAct" id="P23756">
    <property type="interactions" value="1"/>
</dbReference>
<dbReference type="EvolutionaryTrace" id="P23756"/>
<dbReference type="GO" id="GO:0009507">
    <property type="term" value="C:chloroplast"/>
    <property type="evidence" value="ECO:0007669"/>
    <property type="project" value="UniProtKB-SubCell"/>
</dbReference>
<dbReference type="GO" id="GO:0016984">
    <property type="term" value="F:ribulose-bisphosphate carboxylase activity"/>
    <property type="evidence" value="ECO:0007669"/>
    <property type="project" value="UniProtKB-UniRule"/>
</dbReference>
<dbReference type="GO" id="GO:0019253">
    <property type="term" value="P:reductive pentose-phosphate cycle"/>
    <property type="evidence" value="ECO:0007669"/>
    <property type="project" value="UniProtKB-UniRule"/>
</dbReference>
<dbReference type="CDD" id="cd03527">
    <property type="entry name" value="RuBisCO_small"/>
    <property type="match status" value="1"/>
</dbReference>
<dbReference type="Gene3D" id="3.30.190.10">
    <property type="entry name" value="Ribulose bisphosphate carboxylase, small subunit"/>
    <property type="match status" value="1"/>
</dbReference>
<dbReference type="HAMAP" id="MF_00859">
    <property type="entry name" value="RuBisCO_S_bact"/>
    <property type="match status" value="1"/>
</dbReference>
<dbReference type="InterPro" id="IPR024681">
    <property type="entry name" value="RuBisCO_ssu"/>
</dbReference>
<dbReference type="InterPro" id="IPR000894">
    <property type="entry name" value="RuBisCO_ssu_dom"/>
</dbReference>
<dbReference type="InterPro" id="IPR036385">
    <property type="entry name" value="RuBisCO_ssu_sf"/>
</dbReference>
<dbReference type="PANTHER" id="PTHR31262">
    <property type="entry name" value="RIBULOSE BISPHOSPHATE CARBOXYLASE SMALL CHAIN 1, CHLOROPLASTIC"/>
    <property type="match status" value="1"/>
</dbReference>
<dbReference type="PANTHER" id="PTHR31262:SF23">
    <property type="entry name" value="RIBULOSE BISPHOSPHATE CARBOXYLASE SMALL SUBUNIT"/>
    <property type="match status" value="1"/>
</dbReference>
<dbReference type="Pfam" id="PF00101">
    <property type="entry name" value="RuBisCO_small"/>
    <property type="match status" value="1"/>
</dbReference>
<dbReference type="SMART" id="SM00961">
    <property type="entry name" value="RuBisCO_small"/>
    <property type="match status" value="1"/>
</dbReference>
<dbReference type="SUPFAM" id="SSF55239">
    <property type="entry name" value="RuBisCO, small subunit"/>
    <property type="match status" value="1"/>
</dbReference>
<accession>P23756</accession>
<proteinExistence type="evidence at protein level"/>
<reference key="1">
    <citation type="journal article" date="1990" name="Mol. Gen. Genet.">
        <title>Structure of the Rubisco operon from the unicellular red alga Cyanidium caldarium: evidence for a polyphyletic origin of the plastids.</title>
        <authorList>
            <person name="Valentin K.-U."/>
            <person name="Zetsche K."/>
        </authorList>
    </citation>
    <scope>NUCLEOTIDE SEQUENCE [GENOMIC DNA]</scope>
    <source>
        <strain>14-1-1 / Isolate 107.79/Goettingen</strain>
    </source>
</reference>
<reference key="2">
    <citation type="submission" date="2000-02" db="EMBL/GenBank/DDBJ databases">
        <authorList>
            <person name="Whitney S.M."/>
            <person name="Andrews J."/>
        </authorList>
    </citation>
    <scope>NUCLEOTIDE SEQUENCE [GENOMIC DNA]</scope>
    <source>
        <strain>UTEX 2393</strain>
    </source>
</reference>
<reference evidence="5 6 7" key="3">
    <citation type="journal article" date="2012" name="Proc. Natl. Acad. Sci. U.S.A.">
        <title>Structural mechanism of RuBisCO activation by carbamylation of the active site lysine.</title>
        <authorList>
            <person name="Stec B."/>
        </authorList>
    </citation>
    <scope>X-RAY CRYSTALLOGRAPHY (1.96 ANGSTROMS) OF UNACTIVATED HOLOENZYME IN COMPLEX WITH O2 OR CO2 AND MAGNESIUM</scope>
    <scope>FUNCTION</scope>
    <scope>SUBUNIT</scope>
</reference>
<gene>
    <name evidence="1" type="primary">rbcS</name>
</gene>
<evidence type="ECO:0000255" key="1">
    <source>
        <dbReference type="HAMAP-Rule" id="MF_00859"/>
    </source>
</evidence>
<evidence type="ECO:0000269" key="2">
    <source>
    </source>
</evidence>
<evidence type="ECO:0000305" key="3"/>
<evidence type="ECO:0000305" key="4">
    <source>
    </source>
</evidence>
<evidence type="ECO:0007744" key="5">
    <source>
        <dbReference type="PDB" id="4F0H"/>
    </source>
</evidence>
<evidence type="ECO:0007744" key="6">
    <source>
        <dbReference type="PDB" id="4F0K"/>
    </source>
</evidence>
<evidence type="ECO:0007744" key="7">
    <source>
        <dbReference type="PDB" id="4F0M"/>
    </source>
</evidence>
<evidence type="ECO:0007829" key="8">
    <source>
        <dbReference type="PDB" id="4F0H"/>
    </source>
</evidence>
<feature type="chain" id="PRO_0000198598" description="Ribulose bisphosphate carboxylase small subunit">
    <location>
        <begin position="1"/>
        <end position="138"/>
    </location>
</feature>
<feature type="turn" evidence="8">
    <location>
        <begin position="7"/>
        <end position="10"/>
    </location>
</feature>
<feature type="helix" evidence="8">
    <location>
        <begin position="16"/>
        <end position="28"/>
    </location>
</feature>
<feature type="strand" evidence="8">
    <location>
        <begin position="32"/>
        <end position="39"/>
    </location>
</feature>
<feature type="strand" evidence="8">
    <location>
        <begin position="49"/>
        <end position="52"/>
    </location>
</feature>
<feature type="helix" evidence="8">
    <location>
        <begin position="61"/>
        <end position="74"/>
    </location>
</feature>
<feature type="turn" evidence="8">
    <location>
        <begin position="75"/>
        <end position="77"/>
    </location>
</feature>
<feature type="strand" evidence="8">
    <location>
        <begin position="78"/>
        <end position="86"/>
    </location>
</feature>
<feature type="turn" evidence="8">
    <location>
        <begin position="89"/>
        <end position="91"/>
    </location>
</feature>
<feature type="strand" evidence="8">
    <location>
        <begin position="93"/>
        <end position="101"/>
    </location>
</feature>
<feature type="strand" evidence="8">
    <location>
        <begin position="109"/>
        <end position="115"/>
    </location>
</feature>
<feature type="strand" evidence="8">
    <location>
        <begin position="121"/>
        <end position="127"/>
    </location>
</feature>
<feature type="helix" evidence="8">
    <location>
        <begin position="128"/>
        <end position="131"/>
    </location>
</feature>
<feature type="helix" evidence="8">
    <location>
        <begin position="134"/>
        <end position="136"/>
    </location>
</feature>